<reference key="1">
    <citation type="journal article" date="1995" name="Science">
        <title>Whole-genome random sequencing and assembly of Haemophilus influenzae Rd.</title>
        <authorList>
            <person name="Fleischmann R.D."/>
            <person name="Adams M.D."/>
            <person name="White O."/>
            <person name="Clayton R.A."/>
            <person name="Kirkness E.F."/>
            <person name="Kerlavage A.R."/>
            <person name="Bult C.J."/>
            <person name="Tomb J.-F."/>
            <person name="Dougherty B.A."/>
            <person name="Merrick J.M."/>
            <person name="McKenney K."/>
            <person name="Sutton G.G."/>
            <person name="FitzHugh W."/>
            <person name="Fields C.A."/>
            <person name="Gocayne J.D."/>
            <person name="Scott J.D."/>
            <person name="Shirley R."/>
            <person name="Liu L.-I."/>
            <person name="Glodek A."/>
            <person name="Kelley J.M."/>
            <person name="Weidman J.F."/>
            <person name="Phillips C.A."/>
            <person name="Spriggs T."/>
            <person name="Hedblom E."/>
            <person name="Cotton M.D."/>
            <person name="Utterback T.R."/>
            <person name="Hanna M.C."/>
            <person name="Nguyen D.T."/>
            <person name="Saudek D.M."/>
            <person name="Brandon R.C."/>
            <person name="Fine L.D."/>
            <person name="Fritchman J.L."/>
            <person name="Fuhrmann J.L."/>
            <person name="Geoghagen N.S.M."/>
            <person name="Gnehm C.L."/>
            <person name="McDonald L.A."/>
            <person name="Small K.V."/>
            <person name="Fraser C.M."/>
            <person name="Smith H.O."/>
            <person name="Venter J.C."/>
        </authorList>
    </citation>
    <scope>NUCLEOTIDE SEQUENCE [LARGE SCALE GENOMIC DNA]</scope>
    <source>
        <strain>ATCC 51907 / DSM 11121 / KW20 / Rd</strain>
    </source>
</reference>
<accession>P44033</accession>
<feature type="chain" id="PRO_0000077942" description="Putative kinase HI_0665">
    <location>
        <begin position="1"/>
        <end position="343"/>
    </location>
</feature>
<feature type="active site" description="Proton acceptor" evidence="1">
    <location>
        <position position="209"/>
    </location>
</feature>
<gene>
    <name type="ordered locus">HI_0665</name>
</gene>
<comment type="similarity">
    <text evidence="2">Belongs to the HipA Ser/Thr kinase family.</text>
</comment>
<dbReference type="EC" id="2.-.-.-"/>
<dbReference type="EMBL" id="L42023">
    <property type="protein sequence ID" value="AAC22325.1"/>
    <property type="molecule type" value="Genomic_DNA"/>
</dbReference>
<dbReference type="PIR" id="F64011">
    <property type="entry name" value="F64011"/>
</dbReference>
<dbReference type="RefSeq" id="NP_438824.1">
    <property type="nucleotide sequence ID" value="NC_000907.1"/>
</dbReference>
<dbReference type="SMR" id="P44033"/>
<dbReference type="STRING" id="71421.HI_0665"/>
<dbReference type="DNASU" id="949704"/>
<dbReference type="EnsemblBacteria" id="AAC22325">
    <property type="protein sequence ID" value="AAC22325"/>
    <property type="gene ID" value="HI_0665"/>
</dbReference>
<dbReference type="KEGG" id="hin:HI_0665"/>
<dbReference type="PATRIC" id="fig|71421.8.peg.694"/>
<dbReference type="eggNOG" id="COG3550">
    <property type="taxonomic scope" value="Bacteria"/>
</dbReference>
<dbReference type="HOGENOM" id="CLU_070311_0_0_6"/>
<dbReference type="OrthoDB" id="9805913at2"/>
<dbReference type="PhylomeDB" id="P44033"/>
<dbReference type="BioCyc" id="HINF71421:G1GJ1-699-MONOMER"/>
<dbReference type="Proteomes" id="UP000000579">
    <property type="component" value="Chromosome"/>
</dbReference>
<dbReference type="GO" id="GO:0005829">
    <property type="term" value="C:cytosol"/>
    <property type="evidence" value="ECO:0000318"/>
    <property type="project" value="GO_Central"/>
</dbReference>
<dbReference type="GO" id="GO:0004674">
    <property type="term" value="F:protein serine/threonine kinase activity"/>
    <property type="evidence" value="ECO:0000318"/>
    <property type="project" value="GO_Central"/>
</dbReference>
<dbReference type="FunFam" id="1.10.1070.20:FF:000001">
    <property type="entry name" value="Serine/threonine-protein kinase toxin HipA"/>
    <property type="match status" value="1"/>
</dbReference>
<dbReference type="Gene3D" id="1.10.1070.20">
    <property type="match status" value="1"/>
</dbReference>
<dbReference type="InterPro" id="IPR012893">
    <property type="entry name" value="HipA-like_C"/>
</dbReference>
<dbReference type="InterPro" id="IPR052028">
    <property type="entry name" value="HipA_Ser/Thr_kinase"/>
</dbReference>
<dbReference type="PANTHER" id="PTHR37419:SF6">
    <property type="entry name" value="KINASE HI_0665-RELATED"/>
    <property type="match status" value="1"/>
</dbReference>
<dbReference type="PANTHER" id="PTHR37419">
    <property type="entry name" value="SERINE/THREONINE-PROTEIN KINASE TOXIN HIPA"/>
    <property type="match status" value="1"/>
</dbReference>
<dbReference type="Pfam" id="PF07804">
    <property type="entry name" value="HipA_C"/>
    <property type="match status" value="1"/>
</dbReference>
<sequence length="343" mass="39832">MNFCRILLKPLKKNEALSGYSAEGLHYLTDNKHFNPELPFSRQEFITVKPQKQQGMSISGFQPKLQLIIKDEHFDSVNQQGNYILKPSPEEYPFLAENEHATMRIMKELGFDVPENGLVSFAGEQNHKEFAFVITRFDRDKQQKPMHQEQLDGAMNIRDKYGKIGADNEQYVSYEQIAKFILQHTENHLAQQREIFRRIIYAYLLGNNDLHLRNFSFIYPKNSHPKLAPIYDFVSVSPYPEIFNSTLLALPLLAREEGNATLAKGFNTQYGEYIGDDFVEFGENIGLNKNVIIQKLIPEIIQEKEKVEQIYSQSFMPQPHIDCVLKTYRKRLALLNLLNEPEL</sequence>
<evidence type="ECO:0000255" key="1"/>
<evidence type="ECO:0000305" key="2"/>
<proteinExistence type="inferred from homology"/>
<keyword id="KW-0418">Kinase</keyword>
<keyword id="KW-1185">Reference proteome</keyword>
<keyword id="KW-0808">Transferase</keyword>
<protein>
    <recommendedName>
        <fullName>Putative kinase HI_0665</fullName>
        <ecNumber>2.-.-.-</ecNumber>
    </recommendedName>
</protein>
<organism>
    <name type="scientific">Haemophilus influenzae (strain ATCC 51907 / DSM 11121 / KW20 / Rd)</name>
    <dbReference type="NCBI Taxonomy" id="71421"/>
    <lineage>
        <taxon>Bacteria</taxon>
        <taxon>Pseudomonadati</taxon>
        <taxon>Pseudomonadota</taxon>
        <taxon>Gammaproteobacteria</taxon>
        <taxon>Pasteurellales</taxon>
        <taxon>Pasteurellaceae</taxon>
        <taxon>Haemophilus</taxon>
    </lineage>
</organism>
<name>Y665_HAEIN</name>